<reference key="1">
    <citation type="journal article" date="2001" name="Biochem. Biophys. Res. Commun.">
        <title>BXMAS1 identifies a cluster of homologous genes differentially expressed in B cells.</title>
        <authorList>
            <person name="Nakayama Y."/>
            <person name="Weissman S.M."/>
            <person name="Bothwell A.L.M."/>
        </authorList>
    </citation>
    <scope>NUCLEOTIDE SEQUENCE [MRNA] (ISOFORM 1)</scope>
    <scope>FUNCTION</scope>
    <scope>VARIANTS HIS-267; ASP-418 AND ILE-466</scope>
</reference>
<reference key="2">
    <citation type="journal article" date="2001" name="Immunity">
        <title>IRTA1 and IRTA2, novel immunoglobulin superfamily receptors expressed in B cells and involved in chromosome 1q21 abnormalities in B cell malignancy.</title>
        <authorList>
            <person name="Hatzivassiliou G."/>
            <person name="Miller I."/>
            <person name="Takizawa J."/>
            <person name="Palanisamy N."/>
            <person name="Rao P.H."/>
            <person name="Iida S."/>
            <person name="Tagawa S."/>
            <person name="Taniwaki M."/>
            <person name="Russo J."/>
            <person name="Neri A."/>
            <person name="Cattoretti G."/>
            <person name="Clynes R."/>
            <person name="Mendelsohn C."/>
            <person name="Chaganti R.S.K."/>
            <person name="Dalla-Favera R."/>
        </authorList>
    </citation>
    <scope>NUCLEOTIDE SEQUENCE [MRNA] (ISOFORMS 1; 3; 4 AND 5)</scope>
    <scope>TISSUE SPECIFICITY</scope>
    <scope>DISEASE</scope>
    <scope>VARIANTS HIS-267; ASP-418 AND ILE-466</scope>
</reference>
<reference key="3">
    <citation type="journal article" date="2001" name="Proc. Natl. Acad. Sci. U.S.A.">
        <title>Identification of a family of Fc receptor homologs with preferential B cell expression.</title>
        <authorList>
            <person name="Davis R.S."/>
            <person name="Wang Y.-H."/>
            <person name="Kubagawa H."/>
            <person name="Cooper M.D."/>
        </authorList>
    </citation>
    <scope>NUCLEOTIDE SEQUENCE [MRNA] (ISOFORM 1)</scope>
    <scope>VARIANTS HIS-267; ILE-269; ASP-418 AND ILE-466</scope>
</reference>
<reference key="4">
    <citation type="journal article" date="2003" name="Genome Res.">
        <title>The secreted protein discovery initiative (SPDI), a large-scale effort to identify novel human secreted and transmembrane proteins: a bioinformatics assessment.</title>
        <authorList>
            <person name="Clark H.F."/>
            <person name="Gurney A.L."/>
            <person name="Abaya E."/>
            <person name="Baker K."/>
            <person name="Baldwin D.T."/>
            <person name="Brush J."/>
            <person name="Chen J."/>
            <person name="Chow B."/>
            <person name="Chui C."/>
            <person name="Crowley C."/>
            <person name="Currell B."/>
            <person name="Deuel B."/>
            <person name="Dowd P."/>
            <person name="Eaton D."/>
            <person name="Foster J.S."/>
            <person name="Grimaldi C."/>
            <person name="Gu Q."/>
            <person name="Hass P.E."/>
            <person name="Heldens S."/>
            <person name="Huang A."/>
            <person name="Kim H.S."/>
            <person name="Klimowski L."/>
            <person name="Jin Y."/>
            <person name="Johnson S."/>
            <person name="Lee J."/>
            <person name="Lewis L."/>
            <person name="Liao D."/>
            <person name="Mark M.R."/>
            <person name="Robbie E."/>
            <person name="Sanchez C."/>
            <person name="Schoenfeld J."/>
            <person name="Seshagiri S."/>
            <person name="Simmons L."/>
            <person name="Singh J."/>
            <person name="Smith V."/>
            <person name="Stinson J."/>
            <person name="Vagts A."/>
            <person name="Vandlen R.L."/>
            <person name="Watanabe C."/>
            <person name="Wieand D."/>
            <person name="Woods K."/>
            <person name="Xie M.-H."/>
            <person name="Yansura D.G."/>
            <person name="Yi S."/>
            <person name="Yu G."/>
            <person name="Yuan J."/>
            <person name="Zhang M."/>
            <person name="Zhang Z."/>
            <person name="Goddard A.D."/>
            <person name="Wood W.I."/>
            <person name="Godowski P.J."/>
            <person name="Gray A.M."/>
        </authorList>
    </citation>
    <scope>NUCLEOTIDE SEQUENCE [LARGE SCALE MRNA] (ISOFORM 2)</scope>
</reference>
<reference key="5">
    <citation type="journal article" date="2007" name="BMC Genomics">
        <title>The full-ORF clone resource of the German cDNA consortium.</title>
        <authorList>
            <person name="Bechtel S."/>
            <person name="Rosenfelder H."/>
            <person name="Duda A."/>
            <person name="Schmidt C.P."/>
            <person name="Ernst U."/>
            <person name="Wellenreuther R."/>
            <person name="Mehrle A."/>
            <person name="Schuster C."/>
            <person name="Bahr A."/>
            <person name="Bloecker H."/>
            <person name="Heubner D."/>
            <person name="Hoerlein A."/>
            <person name="Michel G."/>
            <person name="Wedler H."/>
            <person name="Koehrer K."/>
            <person name="Ottenwaelder B."/>
            <person name="Poustka A."/>
            <person name="Wiemann S."/>
            <person name="Schupp I."/>
        </authorList>
    </citation>
    <scope>NUCLEOTIDE SEQUENCE [LARGE SCALE MRNA] (ISOFORM 2)</scope>
    <source>
        <tissue>Lymph node</tissue>
    </source>
</reference>
<reference key="6">
    <citation type="submission" date="2006-10" db="EMBL/GenBank/DDBJ databases">
        <authorList>
            <person name="Livingston R.J."/>
            <person name="Shaffer T."/>
            <person name="McFarland I."/>
            <person name="Nguyen C.P."/>
            <person name="Stanaway I.B."/>
            <person name="Rajkumar N."/>
            <person name="Johnson E.J."/>
            <person name="da Ponte S.H."/>
            <person name="Willa H."/>
            <person name="Ahearn M.O."/>
            <person name="Bertucci C."/>
            <person name="Acklestad J."/>
            <person name="Carroll A."/>
            <person name="Swanson J."/>
            <person name="Gildersleeve H.I."/>
            <person name="Nickerson D.A."/>
        </authorList>
    </citation>
    <scope>NUCLEOTIDE SEQUENCE [GENOMIC DNA]</scope>
    <scope>VARIANTS HIS-267; ASP-418 AND ILE-466</scope>
</reference>
<reference key="7">
    <citation type="journal article" date="2006" name="Nature">
        <title>The DNA sequence and biological annotation of human chromosome 1.</title>
        <authorList>
            <person name="Gregory S.G."/>
            <person name="Barlow K.F."/>
            <person name="McLay K.E."/>
            <person name="Kaul R."/>
            <person name="Swarbreck D."/>
            <person name="Dunham A."/>
            <person name="Scott C.E."/>
            <person name="Howe K.L."/>
            <person name="Woodfine K."/>
            <person name="Spencer C.C.A."/>
            <person name="Jones M.C."/>
            <person name="Gillson C."/>
            <person name="Searle S."/>
            <person name="Zhou Y."/>
            <person name="Kokocinski F."/>
            <person name="McDonald L."/>
            <person name="Evans R."/>
            <person name="Phillips K."/>
            <person name="Atkinson A."/>
            <person name="Cooper R."/>
            <person name="Jones C."/>
            <person name="Hall R.E."/>
            <person name="Andrews T.D."/>
            <person name="Lloyd C."/>
            <person name="Ainscough R."/>
            <person name="Almeida J.P."/>
            <person name="Ambrose K.D."/>
            <person name="Anderson F."/>
            <person name="Andrew R.W."/>
            <person name="Ashwell R.I.S."/>
            <person name="Aubin K."/>
            <person name="Babbage A.K."/>
            <person name="Bagguley C.L."/>
            <person name="Bailey J."/>
            <person name="Beasley H."/>
            <person name="Bethel G."/>
            <person name="Bird C.P."/>
            <person name="Bray-Allen S."/>
            <person name="Brown J.Y."/>
            <person name="Brown A.J."/>
            <person name="Buckley D."/>
            <person name="Burton J."/>
            <person name="Bye J."/>
            <person name="Carder C."/>
            <person name="Chapman J.C."/>
            <person name="Clark S.Y."/>
            <person name="Clarke G."/>
            <person name="Clee C."/>
            <person name="Cobley V."/>
            <person name="Collier R.E."/>
            <person name="Corby N."/>
            <person name="Coville G.J."/>
            <person name="Davies J."/>
            <person name="Deadman R."/>
            <person name="Dunn M."/>
            <person name="Earthrowl M."/>
            <person name="Ellington A.G."/>
            <person name="Errington H."/>
            <person name="Frankish A."/>
            <person name="Frankland J."/>
            <person name="French L."/>
            <person name="Garner P."/>
            <person name="Garnett J."/>
            <person name="Gay L."/>
            <person name="Ghori M.R.J."/>
            <person name="Gibson R."/>
            <person name="Gilby L.M."/>
            <person name="Gillett W."/>
            <person name="Glithero R.J."/>
            <person name="Grafham D.V."/>
            <person name="Griffiths C."/>
            <person name="Griffiths-Jones S."/>
            <person name="Grocock R."/>
            <person name="Hammond S."/>
            <person name="Harrison E.S.I."/>
            <person name="Hart E."/>
            <person name="Haugen E."/>
            <person name="Heath P.D."/>
            <person name="Holmes S."/>
            <person name="Holt K."/>
            <person name="Howden P.J."/>
            <person name="Hunt A.R."/>
            <person name="Hunt S.E."/>
            <person name="Hunter G."/>
            <person name="Isherwood J."/>
            <person name="James R."/>
            <person name="Johnson C."/>
            <person name="Johnson D."/>
            <person name="Joy A."/>
            <person name="Kay M."/>
            <person name="Kershaw J.K."/>
            <person name="Kibukawa M."/>
            <person name="Kimberley A.M."/>
            <person name="King A."/>
            <person name="Knights A.J."/>
            <person name="Lad H."/>
            <person name="Laird G."/>
            <person name="Lawlor S."/>
            <person name="Leongamornlert D.A."/>
            <person name="Lloyd D.M."/>
            <person name="Loveland J."/>
            <person name="Lovell J."/>
            <person name="Lush M.J."/>
            <person name="Lyne R."/>
            <person name="Martin S."/>
            <person name="Mashreghi-Mohammadi M."/>
            <person name="Matthews L."/>
            <person name="Matthews N.S.W."/>
            <person name="McLaren S."/>
            <person name="Milne S."/>
            <person name="Mistry S."/>
            <person name="Moore M.J.F."/>
            <person name="Nickerson T."/>
            <person name="O'Dell C.N."/>
            <person name="Oliver K."/>
            <person name="Palmeiri A."/>
            <person name="Palmer S.A."/>
            <person name="Parker A."/>
            <person name="Patel D."/>
            <person name="Pearce A.V."/>
            <person name="Peck A.I."/>
            <person name="Pelan S."/>
            <person name="Phelps K."/>
            <person name="Phillimore B.J."/>
            <person name="Plumb R."/>
            <person name="Rajan J."/>
            <person name="Raymond C."/>
            <person name="Rouse G."/>
            <person name="Saenphimmachak C."/>
            <person name="Sehra H.K."/>
            <person name="Sheridan E."/>
            <person name="Shownkeen R."/>
            <person name="Sims S."/>
            <person name="Skuce C.D."/>
            <person name="Smith M."/>
            <person name="Steward C."/>
            <person name="Subramanian S."/>
            <person name="Sycamore N."/>
            <person name="Tracey A."/>
            <person name="Tromans A."/>
            <person name="Van Helmond Z."/>
            <person name="Wall M."/>
            <person name="Wallis J.M."/>
            <person name="White S."/>
            <person name="Whitehead S.L."/>
            <person name="Wilkinson J.E."/>
            <person name="Willey D.L."/>
            <person name="Williams H."/>
            <person name="Wilming L."/>
            <person name="Wray P.W."/>
            <person name="Wu Z."/>
            <person name="Coulson A."/>
            <person name="Vaudin M."/>
            <person name="Sulston J.E."/>
            <person name="Durbin R.M."/>
            <person name="Hubbard T."/>
            <person name="Wooster R."/>
            <person name="Dunham I."/>
            <person name="Carter N.P."/>
            <person name="McVean G."/>
            <person name="Ross M.T."/>
            <person name="Harrow J."/>
            <person name="Olson M.V."/>
            <person name="Beck S."/>
            <person name="Rogers J."/>
            <person name="Bentley D.R."/>
        </authorList>
    </citation>
    <scope>NUCLEOTIDE SEQUENCE [LARGE SCALE GENOMIC DNA]</scope>
</reference>
<reference key="8">
    <citation type="journal article" date="2004" name="Genome Res.">
        <title>The status, quality, and expansion of the NIH full-length cDNA project: the Mammalian Gene Collection (MGC).</title>
        <authorList>
            <consortium name="The MGC Project Team"/>
        </authorList>
    </citation>
    <scope>NUCLEOTIDE SEQUENCE [LARGE SCALE MRNA] (ISOFORM 1)</scope>
    <scope>VARIANTS ILE-269; ASP-418 AND ILE-466</scope>
</reference>
<reference key="9">
    <citation type="journal article" date="2002" name="Blood">
        <title>IRTAs: a new family of immunoglobulin-like receptors differentially expressed in B cells.</title>
        <authorList>
            <person name="Miller I."/>
            <person name="Hatzivassiliou G."/>
            <person name="Cattoretti G."/>
            <person name="Mendelsohn C."/>
            <person name="Dalla-Favera R."/>
        </authorList>
    </citation>
    <scope>TISSUE SPECIFICITY</scope>
</reference>
<reference key="10">
    <citation type="journal article" date="2006" name="Int. Immunol.">
        <title>Expression pattern of the human FcRH/IRTA receptors in normal tissue and in B-chronic lymphocytic leukemia.</title>
        <authorList>
            <person name="Polson A.G."/>
            <person name="Zheng B."/>
            <person name="Elkins K."/>
            <person name="Chang W."/>
            <person name="Du C."/>
            <person name="Dowd P."/>
            <person name="Yen L."/>
            <person name="Tan C."/>
            <person name="Hongo J.-A."/>
            <person name="Koeppen H."/>
            <person name="Ebens A."/>
        </authorList>
    </citation>
    <scope>SUBCELLULAR LOCATION</scope>
    <scope>TISSUE SPECIFICITY</scope>
</reference>
<reference key="11">
    <citation type="journal article" date="2018" name="Int. Immunol.">
        <title>CD21 and FCRL5 form a receptor complex with robust B-cell activating capacity.</title>
        <authorList>
            <person name="Franco A."/>
            <person name="Kraus Z."/>
            <person name="Li H."/>
            <person name="Seibert N."/>
            <person name="Dement-Brown J."/>
            <person name="Tolnay M."/>
        </authorList>
    </citation>
    <scope>FUNCTION</scope>
    <scope>INTERACTION WITH CR2 AND CD19</scope>
</reference>
<reference key="12">
    <citation type="journal article" date="2006" name="Science">
        <title>The consensus coding sequences of human breast and colorectal cancers.</title>
        <authorList>
            <person name="Sjoeblom T."/>
            <person name="Jones S."/>
            <person name="Wood L.D."/>
            <person name="Parsons D.W."/>
            <person name="Lin J."/>
            <person name="Barber T.D."/>
            <person name="Mandelker D."/>
            <person name="Leary R.J."/>
            <person name="Ptak J."/>
            <person name="Silliman N."/>
            <person name="Szabo S."/>
            <person name="Buckhaults P."/>
            <person name="Farrell C."/>
            <person name="Meeh P."/>
            <person name="Markowitz S.D."/>
            <person name="Willis J."/>
            <person name="Dawson D."/>
            <person name="Willson J.K.V."/>
            <person name="Gazdar A.F."/>
            <person name="Hartigan J."/>
            <person name="Wu L."/>
            <person name="Liu C."/>
            <person name="Parmigiani G."/>
            <person name="Park B.H."/>
            <person name="Bachman K.E."/>
            <person name="Papadopoulos N."/>
            <person name="Vogelstein B."/>
            <person name="Kinzler K.W."/>
            <person name="Velculescu V.E."/>
        </authorList>
    </citation>
    <scope>VARIANT [LARGE SCALE ANALYSIS] CYS-687</scope>
</reference>
<feature type="signal peptide" evidence="3">
    <location>
        <begin position="1"/>
        <end position="15"/>
    </location>
</feature>
<feature type="chain" id="PRO_0000225622" description="Fc receptor-like protein 5">
    <location>
        <begin position="16"/>
        <end position="977"/>
    </location>
</feature>
<feature type="topological domain" description="Extracellular" evidence="3">
    <location>
        <begin position="16"/>
        <end position="851"/>
    </location>
</feature>
<feature type="transmembrane region" description="Helical" evidence="3">
    <location>
        <begin position="852"/>
        <end position="872"/>
    </location>
</feature>
<feature type="topological domain" description="Cytoplasmic" evidence="3">
    <location>
        <begin position="873"/>
        <end position="977"/>
    </location>
</feature>
<feature type="domain" description="Ig-like C2-type 1">
    <location>
        <begin position="23"/>
        <end position="101"/>
    </location>
</feature>
<feature type="domain" description="Ig-like C2-type 2">
    <location>
        <begin position="188"/>
        <end position="271"/>
    </location>
</feature>
<feature type="domain" description="Ig-like C2-type 3">
    <location>
        <begin position="287"/>
        <end position="374"/>
    </location>
</feature>
<feature type="domain" description="Ig-like C2-type 4">
    <location>
        <begin position="380"/>
        <end position="463"/>
    </location>
</feature>
<feature type="domain" description="Ig-like C2-type 5">
    <location>
        <begin position="473"/>
        <end position="556"/>
    </location>
</feature>
<feature type="domain" description="Ig-like C2-type 6">
    <location>
        <begin position="566"/>
        <end position="651"/>
    </location>
</feature>
<feature type="domain" description="Ig-like C2-type 7">
    <location>
        <begin position="659"/>
        <end position="744"/>
    </location>
</feature>
<feature type="domain" description="Ig-like C2-type 8">
    <location>
        <begin position="752"/>
        <end position="834"/>
    </location>
</feature>
<feature type="region of interest" description="Disordered" evidence="5">
    <location>
        <begin position="879"/>
        <end position="898"/>
    </location>
</feature>
<feature type="short sequence motif" description="ITIM motif 1">
    <location>
        <begin position="897"/>
        <end position="902"/>
    </location>
</feature>
<feature type="short sequence motif" description="ITIM motif 2">
    <location>
        <begin position="910"/>
        <end position="915"/>
    </location>
</feature>
<feature type="short sequence motif" description="ITIM motif 3">
    <location>
        <begin position="922"/>
        <end position="927"/>
    </location>
</feature>
<feature type="short sequence motif" description="ITIM motif 4">
    <location>
        <begin position="952"/>
        <end position="957"/>
    </location>
</feature>
<feature type="compositionally biased region" description="Low complexity" evidence="5">
    <location>
        <begin position="883"/>
        <end position="892"/>
    </location>
</feature>
<feature type="glycosylation site" description="N-linked (GlcNAc...) asparagine" evidence="3">
    <location>
        <position position="383"/>
    </location>
</feature>
<feature type="disulfide bond" evidence="4">
    <location>
        <begin position="44"/>
        <end position="85"/>
    </location>
</feature>
<feature type="disulfide bond" evidence="4">
    <location>
        <begin position="211"/>
        <end position="260"/>
    </location>
</feature>
<feature type="disulfide bond" evidence="4">
    <location>
        <begin position="308"/>
        <end position="355"/>
    </location>
</feature>
<feature type="disulfide bond" evidence="4">
    <location>
        <begin position="401"/>
        <end position="448"/>
    </location>
</feature>
<feature type="disulfide bond" evidence="4">
    <location>
        <begin position="494"/>
        <end position="541"/>
    </location>
</feature>
<feature type="disulfide bond" evidence="4">
    <location>
        <begin position="587"/>
        <end position="634"/>
    </location>
</feature>
<feature type="disulfide bond" evidence="4">
    <location>
        <begin position="680"/>
        <end position="727"/>
    </location>
</feature>
<feature type="disulfide bond" evidence="4">
    <location>
        <begin position="773"/>
        <end position="819"/>
    </location>
</feature>
<feature type="splice variant" id="VSP_017379" description="In isoform 2." evidence="16 17">
    <original>ASLILQAPLSVFEGDSVVLRCR</original>
    <variation>EMGFPHAAQANVELLGSSDLLT</variation>
    <location>
        <begin position="103"/>
        <end position="124"/>
    </location>
</feature>
<feature type="splice variant" id="VSP_017380" description="In isoform 2." evidence="16 17">
    <location>
        <begin position="125"/>
        <end position="977"/>
    </location>
</feature>
<feature type="splice variant" id="VSP_017381" description="In isoform 5." evidence="15">
    <original>H</original>
    <variation>Q</variation>
    <location>
        <position position="152"/>
    </location>
</feature>
<feature type="splice variant" id="VSP_017382" description="In isoform 5." evidence="15">
    <location>
        <begin position="153"/>
        <end position="977"/>
    </location>
</feature>
<feature type="splice variant" id="VSP_017383" description="In isoform 4." evidence="15">
    <original>VPVSRPILTLRVPRAQAVVGDLLELHCEAPRG</original>
    <variation>GKCWVLASHPPLAEFSLTHSFKNLFALSSFLP</variation>
    <location>
        <begin position="561"/>
        <end position="592"/>
    </location>
</feature>
<feature type="splice variant" id="VSP_017384" description="In isoform 4." evidence="15">
    <location>
        <begin position="593"/>
        <end position="977"/>
    </location>
</feature>
<feature type="splice variant" id="VSP_017385" description="In isoform 3." evidence="15">
    <original>VPVSRPVLTLRAP</original>
    <variation>GEWALPTSSTSEN</variation>
    <location>
        <begin position="747"/>
        <end position="759"/>
    </location>
</feature>
<feature type="splice variant" id="VSP_017386" description="In isoform 3." evidence="15">
    <location>
        <begin position="760"/>
        <end position="977"/>
    </location>
</feature>
<feature type="sequence variant" id="VAR_025447" description="In dbSNP:rs6679793." evidence="6 7 8 14">
    <original>Y</original>
    <variation>H</variation>
    <location>
        <position position="267"/>
    </location>
</feature>
<feature type="sequence variant" id="VAR_025448" description="In dbSNP:rs12036228." evidence="8 10">
    <original>V</original>
    <variation>I</variation>
    <location>
        <position position="269"/>
    </location>
</feature>
<feature type="sequence variant" id="VAR_025449" description="In dbSNP:rs2012199." evidence="6 7 8 10 14">
    <original>G</original>
    <variation>D</variation>
    <location>
        <position position="418"/>
    </location>
</feature>
<feature type="sequence variant" id="VAR_056044" description="In dbSNP:rs16838748.">
    <original>N</original>
    <variation>K</variation>
    <location>
        <position position="427"/>
    </location>
</feature>
<feature type="sequence variant" id="VAR_056045" description="In dbSNP:rs34868810.">
    <original>Q</original>
    <variation>R</variation>
    <location>
        <position position="457"/>
    </location>
</feature>
<feature type="sequence variant" id="VAR_025450" description="In dbSNP:rs6427384." evidence="6 7 8 10 14">
    <original>V</original>
    <variation>I</variation>
    <location>
        <position position="466"/>
    </location>
</feature>
<feature type="sequence variant" id="VAR_035514" description="In a breast cancer sample; somatic mutation." evidence="12">
    <original>S</original>
    <variation>C</variation>
    <location>
        <position position="687"/>
    </location>
</feature>
<feature type="sequence conflict" description="In Ref. 1; AAK50059." evidence="18" ref="1">
    <original>L</original>
    <variation>P</variation>
    <location>
        <position position="733"/>
    </location>
</feature>
<feature type="sequence conflict" description="In Ref. 1; AAK50059." evidence="18" ref="1">
    <original>S</original>
    <variation>P</variation>
    <location>
        <position position="890"/>
    </location>
</feature>
<sequence>MLLWVILLVLAPVSGQFARTPRPIIFLQPPWTTVFQGERVTLTCKGFRFYSPQKTKWYHRYLGKEILRETPDNILEVQESGEYRCQAQGSPLSSPVHLDFSSASLILQAPLSVFEGDSVVLRCRAKAEVTLNNTIYKNDNVLAFLNKRTDFHIPHACLKDNGAYRCTGYKESCCPVSSNTVKIQVQEPFTRPVLRASSFQPISGNPVTLTCETQLSLERSDVPLRFRFFRDDQTLGLGWSLSPNFQITAMWSKDSGFYWCKAATMPYSVISDSPRSWIQVQIPASHPVLTLSPEKALNFEGTKVTLHCETQEDSLRTLYRFYHEGVPLRHKSVRCERGASISFSLTTENSGNYYCTADNGLGAKPSKAVSLSVTVPVSHPVLNLSSPEDLIFEGAKVTLHCEAQRGSLPILYQFHHEGAALERRSANSAGGVAISFSLTAEHSGNYYCTADNGFGPQRSKAVSLSVTVPVSHPVLTLSSAEALTFEGATVTLHCEVQRGSPQILYQFYHEDMPLWSSSTPSVGRVSFSFSLTEGHSGNYYCTADNGFGPQRSEVVSLFVTVPVSRPILTLRVPRAQAVVGDLLELHCEAPRGSPPILYWFYHEDVTLGSSSAPSGGEASFNLSLTAEHSGNYSCEANNGLVAQHSDTISLSVIVPVSRPILTFRAPRAQAVVGDLLELHCEALRGSSPILYWFYHEDVTLGKISAPSGGGASFNLSLTTEHSGIYSCEADNGLEAQRSEMVTLKVAVPVSRPVLTLRAPGTHAAVGDLLELHCEALRGSPLILYRFFHEDVTLGNRSSPSGGASLNLSLTAEHSGNYSCEADNGLGAQRSETVTLYITGLTANRSGPFATGVAGGLLSIAGLAAGALLLYCWLSRKAGRKPASDPARSPSDSDSQEPTYHNVPAWEELQPVYTNANPRGENVVYSEVRIIQEKKKHAVASDPRHLRNKGSPIIYSEVKVASTPVSGSLFLASSAPHR</sequence>
<proteinExistence type="evidence at protein level"/>
<keyword id="KW-0025">Alternative splicing</keyword>
<keyword id="KW-1003">Cell membrane</keyword>
<keyword id="KW-1015">Disulfide bond</keyword>
<keyword id="KW-0278">Fertilization</keyword>
<keyword id="KW-0325">Glycoprotein</keyword>
<keyword id="KW-0393">Immunoglobulin domain</keyword>
<keyword id="KW-0472">Membrane</keyword>
<keyword id="KW-1267">Proteomics identification</keyword>
<keyword id="KW-0675">Receptor</keyword>
<keyword id="KW-1185">Reference proteome</keyword>
<keyword id="KW-0677">Repeat</keyword>
<keyword id="KW-0732">Signal</keyword>
<keyword id="KW-0812">Transmembrane</keyword>
<keyword id="KW-1133">Transmembrane helix</keyword>
<organism>
    <name type="scientific">Homo sapiens</name>
    <name type="common">Human</name>
    <dbReference type="NCBI Taxonomy" id="9606"/>
    <lineage>
        <taxon>Eukaryota</taxon>
        <taxon>Metazoa</taxon>
        <taxon>Chordata</taxon>
        <taxon>Craniata</taxon>
        <taxon>Vertebrata</taxon>
        <taxon>Euteleostomi</taxon>
        <taxon>Mammalia</taxon>
        <taxon>Eutheria</taxon>
        <taxon>Euarchontoglires</taxon>
        <taxon>Primates</taxon>
        <taxon>Haplorrhini</taxon>
        <taxon>Catarrhini</taxon>
        <taxon>Hominidae</taxon>
        <taxon>Homo</taxon>
    </lineage>
</organism>
<dbReference type="EMBL" id="AF369794">
    <property type="protein sequence ID" value="AAK50059.2"/>
    <property type="molecule type" value="mRNA"/>
</dbReference>
<dbReference type="EMBL" id="AF343662">
    <property type="protein sequence ID" value="AAK31325.1"/>
    <property type="molecule type" value="mRNA"/>
</dbReference>
<dbReference type="EMBL" id="AF343663">
    <property type="protein sequence ID" value="AAK31326.1"/>
    <property type="molecule type" value="mRNA"/>
</dbReference>
<dbReference type="EMBL" id="AF343664">
    <property type="protein sequence ID" value="AAK31327.1"/>
    <property type="molecule type" value="mRNA"/>
</dbReference>
<dbReference type="EMBL" id="AF343665">
    <property type="protein sequence ID" value="AAK31328.1"/>
    <property type="molecule type" value="mRNA"/>
</dbReference>
<dbReference type="EMBL" id="AF397453">
    <property type="protein sequence ID" value="AAK93971.1"/>
    <property type="molecule type" value="mRNA"/>
</dbReference>
<dbReference type="EMBL" id="AY358085">
    <property type="protein sequence ID" value="AAQ88452.1"/>
    <property type="molecule type" value="mRNA"/>
</dbReference>
<dbReference type="EMBL" id="AL834187">
    <property type="protein sequence ID" value="CAH56486.1"/>
    <property type="molecule type" value="mRNA"/>
</dbReference>
<dbReference type="EMBL" id="EF064730">
    <property type="protein sequence ID" value="ABK41913.1"/>
    <property type="molecule type" value="Genomic_DNA"/>
</dbReference>
<dbReference type="EMBL" id="AL135929">
    <property type="status" value="NOT_ANNOTATED_CDS"/>
    <property type="molecule type" value="Genomic_DNA"/>
</dbReference>
<dbReference type="EMBL" id="AL353899">
    <property type="status" value="NOT_ANNOTATED_CDS"/>
    <property type="molecule type" value="Genomic_DNA"/>
</dbReference>
<dbReference type="EMBL" id="BC101066">
    <property type="protein sequence ID" value="AAI01067.1"/>
    <property type="molecule type" value="mRNA"/>
</dbReference>
<dbReference type="EMBL" id="BC101067">
    <property type="protein sequence ID" value="AAI01068.1"/>
    <property type="molecule type" value="mRNA"/>
</dbReference>
<dbReference type="EMBL" id="BC101069">
    <property type="protein sequence ID" value="AAI01070.1"/>
    <property type="molecule type" value="mRNA"/>
</dbReference>
<dbReference type="CCDS" id="CCDS1165.1">
    <molecule id="Q96RD9-1"/>
</dbReference>
<dbReference type="RefSeq" id="NP_001182317.1">
    <property type="nucleotide sequence ID" value="NM_001195388.1"/>
</dbReference>
<dbReference type="RefSeq" id="NP_112571.2">
    <molecule id="Q96RD9-1"/>
    <property type="nucleotide sequence ID" value="NM_031281.3"/>
</dbReference>
<dbReference type="BioGRID" id="123640">
    <property type="interactions" value="16"/>
</dbReference>
<dbReference type="FunCoup" id="Q96RD9">
    <property type="interactions" value="12"/>
</dbReference>
<dbReference type="IntAct" id="Q96RD9">
    <property type="interactions" value="10"/>
</dbReference>
<dbReference type="STRING" id="9606.ENSP00000354691"/>
<dbReference type="GlyCosmos" id="Q96RD9">
    <property type="glycosylation" value="1 site, No reported glycans"/>
</dbReference>
<dbReference type="GlyGen" id="Q96RD9">
    <property type="glycosylation" value="5 sites, 2 N-linked glycans (1 site)"/>
</dbReference>
<dbReference type="iPTMnet" id="Q96RD9"/>
<dbReference type="PhosphoSitePlus" id="Q96RD9"/>
<dbReference type="BioMuta" id="FCRL5"/>
<dbReference type="DMDM" id="296439341"/>
<dbReference type="MassIVE" id="Q96RD9"/>
<dbReference type="PaxDb" id="9606-ENSP00000354691"/>
<dbReference type="PeptideAtlas" id="Q96RD9"/>
<dbReference type="ProteomicsDB" id="77948">
    <molecule id="Q96RD9-1"/>
</dbReference>
<dbReference type="ProteomicsDB" id="77949">
    <molecule id="Q96RD9-2"/>
</dbReference>
<dbReference type="ProteomicsDB" id="77950">
    <molecule id="Q96RD9-3"/>
</dbReference>
<dbReference type="ProteomicsDB" id="77951">
    <molecule id="Q96RD9-4"/>
</dbReference>
<dbReference type="ProteomicsDB" id="77952">
    <molecule id="Q96RD9-5"/>
</dbReference>
<dbReference type="ABCD" id="Q96RD9">
    <property type="antibodies" value="76 sequenced antibodies"/>
</dbReference>
<dbReference type="Antibodypedia" id="47044">
    <property type="antibodies" value="297 antibodies from 31 providers"/>
</dbReference>
<dbReference type="DNASU" id="83416"/>
<dbReference type="Ensembl" id="ENST00000361835.8">
    <molecule id="Q96RD9-1"/>
    <property type="protein sequence ID" value="ENSP00000354691.3"/>
    <property type="gene ID" value="ENSG00000143297.19"/>
</dbReference>
<dbReference type="Ensembl" id="ENST00000368189.3">
    <molecule id="Q96RD9-4"/>
    <property type="protein sequence ID" value="ENSP00000357172.3"/>
    <property type="gene ID" value="ENSG00000143297.19"/>
</dbReference>
<dbReference type="Ensembl" id="ENST00000368190.7">
    <molecule id="Q96RD9-3"/>
    <property type="protein sequence ID" value="ENSP00000357173.3"/>
    <property type="gene ID" value="ENSG00000143297.19"/>
</dbReference>
<dbReference type="GeneID" id="83416"/>
<dbReference type="KEGG" id="hsa:83416"/>
<dbReference type="MANE-Select" id="ENST00000361835.8">
    <property type="protein sequence ID" value="ENSP00000354691.3"/>
    <property type="RefSeq nucleotide sequence ID" value="NM_031281.3"/>
    <property type="RefSeq protein sequence ID" value="NP_112571.2"/>
</dbReference>
<dbReference type="UCSC" id="uc001fqu.3">
    <molecule id="Q96RD9-1"/>
    <property type="organism name" value="human"/>
</dbReference>
<dbReference type="AGR" id="HGNC:18508"/>
<dbReference type="CTD" id="83416"/>
<dbReference type="DisGeNET" id="83416"/>
<dbReference type="GeneCards" id="FCRL5"/>
<dbReference type="HGNC" id="HGNC:18508">
    <property type="gene designation" value="FCRL5"/>
</dbReference>
<dbReference type="HPA" id="ENSG00000143297">
    <property type="expression patterns" value="Tissue enriched (lymphoid)"/>
</dbReference>
<dbReference type="MIM" id="605877">
    <property type="type" value="gene"/>
</dbReference>
<dbReference type="neXtProt" id="NX_Q96RD9"/>
<dbReference type="OpenTargets" id="ENSG00000143297"/>
<dbReference type="PharmGKB" id="PA142671769"/>
<dbReference type="VEuPathDB" id="HostDB:ENSG00000143297"/>
<dbReference type="eggNOG" id="ENOG502S65W">
    <property type="taxonomic scope" value="Eukaryota"/>
</dbReference>
<dbReference type="GeneTree" id="ENSGT01050000244808"/>
<dbReference type="HOGENOM" id="CLU_325948_0_0_1"/>
<dbReference type="InParanoid" id="Q96RD9"/>
<dbReference type="OMA" id="NVPAWIE"/>
<dbReference type="OrthoDB" id="9950534at2759"/>
<dbReference type="PAN-GO" id="Q96RD9">
    <property type="GO annotations" value="3 GO annotations based on evolutionary models"/>
</dbReference>
<dbReference type="PhylomeDB" id="Q96RD9"/>
<dbReference type="TreeFam" id="TF351107"/>
<dbReference type="PathwayCommons" id="Q96RD9"/>
<dbReference type="SignaLink" id="Q96RD9"/>
<dbReference type="BioGRID-ORCS" id="83416">
    <property type="hits" value="11 hits in 1142 CRISPR screens"/>
</dbReference>
<dbReference type="ChiTaRS" id="FCRL5">
    <property type="organism name" value="human"/>
</dbReference>
<dbReference type="GeneWiki" id="FCRL5"/>
<dbReference type="GenomeRNAi" id="83416"/>
<dbReference type="Pharos" id="Q96RD9">
    <property type="development level" value="Tbio"/>
</dbReference>
<dbReference type="PRO" id="PR:Q96RD9"/>
<dbReference type="Proteomes" id="UP000005640">
    <property type="component" value="Chromosome 1"/>
</dbReference>
<dbReference type="RNAct" id="Q96RD9">
    <property type="molecule type" value="protein"/>
</dbReference>
<dbReference type="Bgee" id="ENSG00000143297">
    <property type="expression patterns" value="Expressed in spleen and 108 other cell types or tissues"/>
</dbReference>
<dbReference type="GO" id="GO:0009986">
    <property type="term" value="C:cell surface"/>
    <property type="evidence" value="ECO:0000314"/>
    <property type="project" value="UniProtKB"/>
</dbReference>
<dbReference type="GO" id="GO:0009897">
    <property type="term" value="C:external side of plasma membrane"/>
    <property type="evidence" value="ECO:0000318"/>
    <property type="project" value="GO_Central"/>
</dbReference>
<dbReference type="GO" id="GO:0005886">
    <property type="term" value="C:plasma membrane"/>
    <property type="evidence" value="ECO:0000314"/>
    <property type="project" value="UniProt"/>
</dbReference>
<dbReference type="GO" id="GO:0043235">
    <property type="term" value="C:receptor complex"/>
    <property type="evidence" value="ECO:0000314"/>
    <property type="project" value="MGI"/>
</dbReference>
<dbReference type="GO" id="GO:0015026">
    <property type="term" value="F:coreceptor activity"/>
    <property type="evidence" value="ECO:0000314"/>
    <property type="project" value="UniProt"/>
</dbReference>
<dbReference type="GO" id="GO:0004888">
    <property type="term" value="F:transmembrane signaling receptor activity"/>
    <property type="evidence" value="ECO:0000318"/>
    <property type="project" value="GO_Central"/>
</dbReference>
<dbReference type="GO" id="GO:0042113">
    <property type="term" value="P:B cell activation"/>
    <property type="evidence" value="ECO:0000314"/>
    <property type="project" value="UniProt"/>
</dbReference>
<dbReference type="GO" id="GO:0007166">
    <property type="term" value="P:cell surface receptor signaling pathway"/>
    <property type="evidence" value="ECO:0000318"/>
    <property type="project" value="GO_Central"/>
</dbReference>
<dbReference type="GO" id="GO:0006955">
    <property type="term" value="P:immune response"/>
    <property type="evidence" value="ECO:0000318"/>
    <property type="project" value="GO_Central"/>
</dbReference>
<dbReference type="GO" id="GO:0007338">
    <property type="term" value="P:single fertilization"/>
    <property type="evidence" value="ECO:0007669"/>
    <property type="project" value="UniProtKB-KW"/>
</dbReference>
<dbReference type="CDD" id="cd00096">
    <property type="entry name" value="Ig"/>
    <property type="match status" value="4"/>
</dbReference>
<dbReference type="FunFam" id="2.60.40.10:FF:000357">
    <property type="entry name" value="Fc receptor like 1"/>
    <property type="match status" value="6"/>
</dbReference>
<dbReference type="FunFam" id="2.60.40.10:FF:000651">
    <property type="entry name" value="Fc receptor like 1"/>
    <property type="match status" value="1"/>
</dbReference>
<dbReference type="FunFam" id="2.60.40.10:FF:002435">
    <property type="entry name" value="Fc receptor like 5"/>
    <property type="match status" value="1"/>
</dbReference>
<dbReference type="Gene3D" id="2.60.40.10">
    <property type="entry name" value="Immunoglobulins"/>
    <property type="match status" value="9"/>
</dbReference>
<dbReference type="InterPro" id="IPR007110">
    <property type="entry name" value="Ig-like_dom"/>
</dbReference>
<dbReference type="InterPro" id="IPR036179">
    <property type="entry name" value="Ig-like_dom_sf"/>
</dbReference>
<dbReference type="InterPro" id="IPR013783">
    <property type="entry name" value="Ig-like_fold"/>
</dbReference>
<dbReference type="InterPro" id="IPR050488">
    <property type="entry name" value="Ig_Fc_receptor"/>
</dbReference>
<dbReference type="InterPro" id="IPR003599">
    <property type="entry name" value="Ig_sub"/>
</dbReference>
<dbReference type="InterPro" id="IPR003598">
    <property type="entry name" value="Ig_sub2"/>
</dbReference>
<dbReference type="PANTHER" id="PTHR11481:SF117">
    <property type="entry name" value="FC RECEPTOR-LIKE PROTEIN 1"/>
    <property type="match status" value="1"/>
</dbReference>
<dbReference type="PANTHER" id="PTHR11481">
    <property type="entry name" value="IMMUNOGLOBULIN FC RECEPTOR"/>
    <property type="match status" value="1"/>
</dbReference>
<dbReference type="Pfam" id="PF13895">
    <property type="entry name" value="Ig_2"/>
    <property type="match status" value="6"/>
</dbReference>
<dbReference type="SMART" id="SM00409">
    <property type="entry name" value="IG"/>
    <property type="match status" value="9"/>
</dbReference>
<dbReference type="SMART" id="SM00408">
    <property type="entry name" value="IGc2"/>
    <property type="match status" value="8"/>
</dbReference>
<dbReference type="SUPFAM" id="SSF48726">
    <property type="entry name" value="Immunoglobulin"/>
    <property type="match status" value="9"/>
</dbReference>
<dbReference type="PROSITE" id="PS50835">
    <property type="entry name" value="IG_LIKE"/>
    <property type="match status" value="8"/>
</dbReference>
<evidence type="ECO:0000250" key="1"/>
<evidence type="ECO:0000250" key="2">
    <source>
        <dbReference type="UniProtKB" id="Q68SN8"/>
    </source>
</evidence>
<evidence type="ECO:0000255" key="3"/>
<evidence type="ECO:0000255" key="4">
    <source>
        <dbReference type="PROSITE-ProRule" id="PRU00114"/>
    </source>
</evidence>
<evidence type="ECO:0000256" key="5">
    <source>
        <dbReference type="SAM" id="MobiDB-lite"/>
    </source>
</evidence>
<evidence type="ECO:0000269" key="6">
    <source>
    </source>
</evidence>
<evidence type="ECO:0000269" key="7">
    <source>
    </source>
</evidence>
<evidence type="ECO:0000269" key="8">
    <source>
    </source>
</evidence>
<evidence type="ECO:0000269" key="9">
    <source>
    </source>
</evidence>
<evidence type="ECO:0000269" key="10">
    <source>
    </source>
</evidence>
<evidence type="ECO:0000269" key="11">
    <source>
    </source>
</evidence>
<evidence type="ECO:0000269" key="12">
    <source>
    </source>
</evidence>
<evidence type="ECO:0000269" key="13">
    <source>
    </source>
</evidence>
<evidence type="ECO:0000269" key="14">
    <source ref="6"/>
</evidence>
<evidence type="ECO:0000303" key="15">
    <source>
    </source>
</evidence>
<evidence type="ECO:0000303" key="16">
    <source>
    </source>
</evidence>
<evidence type="ECO:0000303" key="17">
    <source>
    </source>
</evidence>
<evidence type="ECO:0000305" key="18"/>
<protein>
    <recommendedName>
        <fullName>Fc receptor-like protein 5</fullName>
        <shortName>FcR-like protein 5</shortName>
        <shortName>FcRL5</shortName>
    </recommendedName>
    <alternativeName>
        <fullName>BXMAS1</fullName>
    </alternativeName>
    <alternativeName>
        <fullName>Fc receptor homolog 5</fullName>
        <shortName>FcRH5</shortName>
    </alternativeName>
    <alternativeName>
        <fullName>Immune receptor translocation-associated protein 2</fullName>
    </alternativeName>
    <cdAntigenName>CD307e</cdAntigenName>
</protein>
<name>FCRL5_HUMAN</name>
<gene>
    <name type="primary">FCRL5</name>
    <name type="synonym">FCRH5</name>
    <name type="synonym">IRTA2</name>
    <name type="ORF">UNQ503/PRO820</name>
</gene>
<accession>Q96RD9</accession>
<accession>A0N0M2</accession>
<accession>B7WNT9</accession>
<accession>B7WP94</accession>
<accession>Q495Q2</accession>
<accession>Q495Q4</accession>
<accession>Q5VYK9</accession>
<accession>Q6UY46</accession>
<comment type="function">
    <text evidence="2 7">Plays an important role in B-cell response to antigen that acts both as a negative or positive coreceptor. Inhibits B-cell receptor (BCR) signaling in the absence of CR2 stimulation but engagement with CR2 and the BCR lead to a superior calcium response compared to CR2 and BCR costimulation (PubMed:30107486). May be involved in B-cell development and differentiation in peripheral lymphoid organs and may be useful markers of B-cell stages. May have an immunoregulatory role in marginal zone B-cells. May play a role in fertilization (By similarity).</text>
</comment>
<comment type="subunit">
    <text evidence="13">Interacts with CR2 (PubMed:30107486). Interacts with CD19 (PubMed:30107486).</text>
</comment>
<comment type="interaction">
    <interactant intactId="EBI-12091825">
        <id>Q96RD9</id>
    </interactant>
    <interactant intactId="EBI-746752">
        <id>Q9Y2J4</id>
        <label>AMOTL2</label>
    </interactant>
    <organismsDiffer>false</organismsDiffer>
    <experiments>3</experiments>
</comment>
<comment type="interaction">
    <interactant intactId="EBI-12091825">
        <id>Q96RD9</id>
    </interactant>
    <interactant intactId="EBI-11522698">
        <id>Q8TC20-4</id>
        <label>CAGE1</label>
    </interactant>
    <organismsDiffer>false</organismsDiffer>
    <experiments>3</experiments>
</comment>
<comment type="interaction">
    <interactant intactId="EBI-12091825">
        <id>Q96RD9</id>
    </interactant>
    <interactant intactId="EBI-739895">
        <id>Q8N6Y0</id>
        <label>USHBP1</label>
    </interactant>
    <organismsDiffer>false</organismsDiffer>
    <experiments>3</experiments>
</comment>
<comment type="subcellular location">
    <subcellularLocation>
        <location evidence="11">Cell membrane</location>
        <topology evidence="11">Single-pass type I membrane protein</topology>
    </subcellularLocation>
</comment>
<comment type="alternative products">
    <event type="alternative splicing"/>
    <isoform>
        <id>Q96RD9-1</id>
        <name>1</name>
        <name>IRTA2c</name>
        <sequence type="displayed"/>
    </isoform>
    <isoform>
        <id>Q96RD9-2</id>
        <name>2</name>
        <sequence type="described" ref="VSP_017379 VSP_017380"/>
    </isoform>
    <isoform>
        <id>Q96RD9-3</id>
        <name>3</name>
        <name>IRTA2a</name>
        <sequence type="described" ref="VSP_017385 VSP_017386"/>
    </isoform>
    <isoform>
        <id>Q96RD9-4</id>
        <name>4</name>
        <name>IRTA2b</name>
        <sequence type="described" ref="VSP_017383 VSP_017384"/>
    </isoform>
    <isoform>
        <id>Q96RD9-5</id>
        <name>5</name>
        <name>IRTA2d</name>
        <sequence type="described" ref="VSP_017381 VSP_017382"/>
    </isoform>
</comment>
<comment type="tissue specificity">
    <text evidence="6 9 11">Expressed in marginal zone B-cells, immunoblasts, tonsillar germinal center centrocytes and in the intraepithelial and interfollicular regions of the tonsil. Expressed in many lymphoma cell lines and on hairy cell leukemia cells. Isoform 1, isoform 3, isoform 4 and isoform 5 are detected in lymph node, spleen, bone marrow, and small intestine with preponderance of isoform 3. Expressed in mature and memory B-cells and down-regulated in germinal center cells (at protein level).</text>
</comment>
<comment type="domain">
    <text evidence="1">Contains 2 copies of a cytoplasmic motif that is referred to as the immunoreceptor tyrosine-based inhibitor motif (ITIM).</text>
</comment>
<comment type="disease">
    <text evidence="6">A chromosomal aberration involving FCRL5 has been found in cell lines with 1q21 abnormalities derived from Burkitt lymphoma. Duplication dup(1)(q21q32).</text>
</comment>